<proteinExistence type="inferred from homology"/>
<dbReference type="EC" id="2.4.2.1"/>
<dbReference type="EMBL" id="LT708304">
    <property type="protein sequence ID" value="SIU01964.1"/>
    <property type="molecule type" value="Genomic_DNA"/>
</dbReference>
<dbReference type="RefSeq" id="NP_856980.1">
    <property type="nucleotide sequence ID" value="NC_002945.3"/>
</dbReference>
<dbReference type="RefSeq" id="WP_003417233.1">
    <property type="nucleotide sequence ID" value="NC_002945.4"/>
</dbReference>
<dbReference type="SMR" id="P0A539"/>
<dbReference type="KEGG" id="mbo:BQ2027_MB3335"/>
<dbReference type="PATRIC" id="fig|233413.5.peg.3665"/>
<dbReference type="UniPathway" id="UPA00606"/>
<dbReference type="Proteomes" id="UP000001419">
    <property type="component" value="Chromosome"/>
</dbReference>
<dbReference type="GO" id="GO:0005737">
    <property type="term" value="C:cytoplasm"/>
    <property type="evidence" value="ECO:0007669"/>
    <property type="project" value="TreeGrafter"/>
</dbReference>
<dbReference type="GO" id="GO:0004731">
    <property type="term" value="F:purine-nucleoside phosphorylase activity"/>
    <property type="evidence" value="ECO:0007669"/>
    <property type="project" value="UniProtKB-EC"/>
</dbReference>
<dbReference type="GO" id="GO:0009116">
    <property type="term" value="P:nucleoside metabolic process"/>
    <property type="evidence" value="ECO:0007669"/>
    <property type="project" value="InterPro"/>
</dbReference>
<dbReference type="CDD" id="cd09009">
    <property type="entry name" value="PNP-EcPNPII_like"/>
    <property type="match status" value="1"/>
</dbReference>
<dbReference type="FunFam" id="3.40.50.1580:FF:000007">
    <property type="entry name" value="Purine nucleoside phosphorylase"/>
    <property type="match status" value="1"/>
</dbReference>
<dbReference type="Gene3D" id="3.40.50.1580">
    <property type="entry name" value="Nucleoside phosphorylase domain"/>
    <property type="match status" value="1"/>
</dbReference>
<dbReference type="InterPro" id="IPR000845">
    <property type="entry name" value="Nucleoside_phosphorylase_d"/>
</dbReference>
<dbReference type="InterPro" id="IPR035994">
    <property type="entry name" value="Nucleoside_phosphorylase_sf"/>
</dbReference>
<dbReference type="InterPro" id="IPR011269">
    <property type="entry name" value="PUNP"/>
</dbReference>
<dbReference type="InterPro" id="IPR011268">
    <property type="entry name" value="Purine_phosphorylase"/>
</dbReference>
<dbReference type="InterPro" id="IPR018099">
    <property type="entry name" value="Purine_phosphorylase-2_CS"/>
</dbReference>
<dbReference type="NCBIfam" id="TIGR01697">
    <property type="entry name" value="PNPH-PUNA-XAPA"/>
    <property type="match status" value="1"/>
</dbReference>
<dbReference type="NCBIfam" id="NF006054">
    <property type="entry name" value="PRK08202.1"/>
    <property type="match status" value="1"/>
</dbReference>
<dbReference type="NCBIfam" id="TIGR01698">
    <property type="entry name" value="PUNP"/>
    <property type="match status" value="1"/>
</dbReference>
<dbReference type="PANTHER" id="PTHR11904">
    <property type="entry name" value="METHYLTHIOADENOSINE/PURINE NUCLEOSIDE PHOSPHORYLASE"/>
    <property type="match status" value="1"/>
</dbReference>
<dbReference type="PANTHER" id="PTHR11904:SF9">
    <property type="entry name" value="PURINE NUCLEOSIDE PHOSPHORYLASE-RELATED"/>
    <property type="match status" value="1"/>
</dbReference>
<dbReference type="Pfam" id="PF01048">
    <property type="entry name" value="PNP_UDP_1"/>
    <property type="match status" value="1"/>
</dbReference>
<dbReference type="PIRSF" id="PIRSF000477">
    <property type="entry name" value="PurNPase"/>
    <property type="match status" value="1"/>
</dbReference>
<dbReference type="SUPFAM" id="SSF53167">
    <property type="entry name" value="Purine and uridine phosphorylases"/>
    <property type="match status" value="1"/>
</dbReference>
<dbReference type="PROSITE" id="PS01240">
    <property type="entry name" value="PNP_MTAP_2"/>
    <property type="match status" value="1"/>
</dbReference>
<keyword id="KW-0328">Glycosyltransferase</keyword>
<keyword id="KW-1185">Reference proteome</keyword>
<keyword id="KW-0808">Transferase</keyword>
<sequence>MADPRPDPDELARRAAQVIADRTGIGEHDVAVVLGSGWLPAVAALGSPTTVLPQAELPGFVPPTAAGHAGELLSVPIGAHRVLVLAGRIHAYEGHDLRYVVHPVRAARAAGAQIMVLTNAAGGLRADLQVGQPVLISDHLNLTARSPLVGGEFVDLTDAYSPRLRELARQSDPQLAEGVYAGLPGPHYETPAEIRMLQTLGADLVGMSTVHETIAARAAGAEVLGVSLVTNLAAGITGEPLSHAEVLAAGAASATRMGALLADVIARF</sequence>
<feature type="chain" id="PRO_0000184542" description="Purine nucleoside phosphorylase">
    <location>
        <begin position="1"/>
        <end position="268"/>
    </location>
</feature>
<feature type="binding site" evidence="3">
    <location>
        <position position="36"/>
    </location>
    <ligand>
        <name>phosphate</name>
        <dbReference type="ChEBI" id="CHEBI:43474"/>
    </ligand>
</feature>
<feature type="binding site" evidence="1">
    <location>
        <position position="68"/>
    </location>
    <ligand>
        <name>phosphate</name>
        <dbReference type="ChEBI" id="CHEBI:43474"/>
    </ligand>
</feature>
<feature type="binding site" evidence="1">
    <location>
        <begin position="88"/>
        <end position="90"/>
    </location>
    <ligand>
        <name>phosphate</name>
        <dbReference type="ChEBI" id="CHEBI:43474"/>
    </ligand>
</feature>
<feature type="binding site" evidence="1">
    <location>
        <position position="120"/>
    </location>
    <ligand>
        <name>phosphate</name>
        <dbReference type="ChEBI" id="CHEBI:43474"/>
    </ligand>
</feature>
<feature type="binding site" evidence="1">
    <location>
        <position position="189"/>
    </location>
    <ligand>
        <name>a purine D-ribonucleoside</name>
        <dbReference type="ChEBI" id="CHEBI:142355"/>
    </ligand>
</feature>
<feature type="binding site" evidence="1">
    <location>
        <position position="208"/>
    </location>
    <ligand>
        <name>phosphate</name>
        <dbReference type="ChEBI" id="CHEBI:43474"/>
    </ligand>
</feature>
<feature type="binding site" evidence="1">
    <location>
        <position position="231"/>
    </location>
    <ligand>
        <name>a purine D-ribonucleoside</name>
        <dbReference type="ChEBI" id="CHEBI:142355"/>
    </ligand>
</feature>
<reference key="1">
    <citation type="journal article" date="2003" name="Proc. Natl. Acad. Sci. U.S.A.">
        <title>The complete genome sequence of Mycobacterium bovis.</title>
        <authorList>
            <person name="Garnier T."/>
            <person name="Eiglmeier K."/>
            <person name="Camus J.-C."/>
            <person name="Medina N."/>
            <person name="Mansoor H."/>
            <person name="Pryor M."/>
            <person name="Duthoy S."/>
            <person name="Grondin S."/>
            <person name="Lacroix C."/>
            <person name="Monsempe C."/>
            <person name="Simon S."/>
            <person name="Harris B."/>
            <person name="Atkin R."/>
            <person name="Doggett J."/>
            <person name="Mayes R."/>
            <person name="Keating L."/>
            <person name="Wheeler P.R."/>
            <person name="Parkhill J."/>
            <person name="Barrell B.G."/>
            <person name="Cole S.T."/>
            <person name="Gordon S.V."/>
            <person name="Hewinson R.G."/>
        </authorList>
    </citation>
    <scope>NUCLEOTIDE SEQUENCE [LARGE SCALE GENOMIC DNA]</scope>
    <source>
        <strain>ATCC BAA-935 / AF2122/97</strain>
    </source>
</reference>
<reference key="2">
    <citation type="journal article" date="2017" name="Genome Announc.">
        <title>Updated reference genome sequence and annotation of Mycobacterium bovis AF2122/97.</title>
        <authorList>
            <person name="Malone K.M."/>
            <person name="Farrell D."/>
            <person name="Stuber T.P."/>
            <person name="Schubert O.T."/>
            <person name="Aebersold R."/>
            <person name="Robbe-Austerman S."/>
            <person name="Gordon S.V."/>
        </authorList>
    </citation>
    <scope>NUCLEOTIDE SEQUENCE [LARGE SCALE GENOMIC DNA]</scope>
    <scope>GENOME REANNOTATION</scope>
    <source>
        <strain>ATCC BAA-935 / AF2122/97</strain>
    </source>
</reference>
<evidence type="ECO:0000250" key="1">
    <source>
        <dbReference type="UniProtKB" id="P45563"/>
    </source>
</evidence>
<evidence type="ECO:0000250" key="2">
    <source>
        <dbReference type="UniProtKB" id="P77834"/>
    </source>
</evidence>
<evidence type="ECO:0000250" key="3">
    <source>
        <dbReference type="UniProtKB" id="P9WP01"/>
    </source>
</evidence>
<evidence type="ECO:0000305" key="4"/>
<name>PUNA_MYCBO</name>
<accession>P0A539</accession>
<accession>A0A1R3Y3R6</accession>
<accession>O53359</accession>
<accession>X2BMT9</accession>
<organism>
    <name type="scientific">Mycobacterium bovis (strain ATCC BAA-935 / AF2122/97)</name>
    <dbReference type="NCBI Taxonomy" id="233413"/>
    <lineage>
        <taxon>Bacteria</taxon>
        <taxon>Bacillati</taxon>
        <taxon>Actinomycetota</taxon>
        <taxon>Actinomycetes</taxon>
        <taxon>Mycobacteriales</taxon>
        <taxon>Mycobacteriaceae</taxon>
        <taxon>Mycobacterium</taxon>
        <taxon>Mycobacterium tuberculosis complex</taxon>
    </lineage>
</organism>
<comment type="function">
    <text evidence="2">The purine nucleoside phosphorylases catalyze the phosphorolytic breakdown of the N-glycosidic bond in the beta-(deoxy)ribonucleoside molecules, with the formation of the corresponding free purine bases and pentose-1-phosphate. Cleaves guanosine, inosine, 2'-deoxyguanosine and 2'-deoxyinosine.</text>
</comment>
<comment type="catalytic activity">
    <reaction evidence="2">
        <text>a purine 2'-deoxy-D-ribonucleoside + phosphate = a purine nucleobase + 2-deoxy-alpha-D-ribose 1-phosphate</text>
        <dbReference type="Rhea" id="RHEA:36431"/>
        <dbReference type="ChEBI" id="CHEBI:26386"/>
        <dbReference type="ChEBI" id="CHEBI:43474"/>
        <dbReference type="ChEBI" id="CHEBI:57259"/>
        <dbReference type="ChEBI" id="CHEBI:142361"/>
        <dbReference type="EC" id="2.4.2.1"/>
    </reaction>
</comment>
<comment type="pathway">
    <text>Purine metabolism; purine nucleoside salvage.</text>
</comment>
<comment type="subunit">
    <text evidence="2">Homotrimer.</text>
</comment>
<comment type="similarity">
    <text evidence="4">Belongs to the PNP/MTAP phosphorylase family.</text>
</comment>
<gene>
    <name type="primary">punA</name>
    <name type="synonym">deoD</name>
    <name type="ordered locus">BQ2027_MB3335</name>
</gene>
<protein>
    <recommendedName>
        <fullName>Purine nucleoside phosphorylase</fullName>
        <shortName>PNP</shortName>
        <shortName>Pu-NPase</shortName>
        <ecNumber>2.4.2.1</ecNumber>
    </recommendedName>
    <alternativeName>
        <fullName>Inosine phosphorylase</fullName>
    </alternativeName>
    <alternativeName>
        <fullName>Inosine-guanosine phosphorylase</fullName>
    </alternativeName>
</protein>